<sequence length="207" mass="23686">MTLPDFRLIRLLPLASLVLTACTLPGHKGPGKSPDSPQWRQHQQEVRHLNQYQTRGAFAYISDDQKVYARFFWQQTGQDRYRLLLTNPLGSTELELNAQPGNVQLVDNKGQRYTADDAEEMIGKLTGMPIPLNSLRQWILGLPGDATDYKLDDQYRLSEVNYRQDGKNWKVVYGGYDSKTQPAMPANMELSDGSQRIKLKMDNWIVK</sequence>
<keyword id="KW-0998">Cell outer membrane</keyword>
<keyword id="KW-0143">Chaperone</keyword>
<keyword id="KW-0449">Lipoprotein</keyword>
<keyword id="KW-0472">Membrane</keyword>
<keyword id="KW-0564">Palmitate</keyword>
<keyword id="KW-0653">Protein transport</keyword>
<keyword id="KW-0732">Signal</keyword>
<keyword id="KW-0813">Transport</keyword>
<comment type="function">
    <text evidence="1">Plays a critical role in the incorporation of lipoproteins in the outer membrane after they are released by the LolA protein.</text>
</comment>
<comment type="subunit">
    <text evidence="1">Monomer.</text>
</comment>
<comment type="subcellular location">
    <subcellularLocation>
        <location evidence="1">Cell outer membrane</location>
        <topology evidence="1">Lipid-anchor</topology>
    </subcellularLocation>
</comment>
<comment type="similarity">
    <text evidence="1">Belongs to the LolB family.</text>
</comment>
<protein>
    <recommendedName>
        <fullName evidence="1">Outer-membrane lipoprotein LolB</fullName>
    </recommendedName>
</protein>
<accession>B5FU16</accession>
<feature type="signal peptide" evidence="1">
    <location>
        <begin position="1"/>
        <end position="21"/>
    </location>
</feature>
<feature type="chain" id="PRO_1000100503" description="Outer-membrane lipoprotein LolB">
    <location>
        <begin position="22"/>
        <end position="207"/>
    </location>
</feature>
<feature type="lipid moiety-binding region" description="N-palmitoyl cysteine" evidence="1">
    <location>
        <position position="22"/>
    </location>
</feature>
<feature type="lipid moiety-binding region" description="S-diacylglycerol cysteine" evidence="1">
    <location>
        <position position="22"/>
    </location>
</feature>
<name>LOLB_SALDC</name>
<organism>
    <name type="scientific">Salmonella dublin (strain CT_02021853)</name>
    <dbReference type="NCBI Taxonomy" id="439851"/>
    <lineage>
        <taxon>Bacteria</taxon>
        <taxon>Pseudomonadati</taxon>
        <taxon>Pseudomonadota</taxon>
        <taxon>Gammaproteobacteria</taxon>
        <taxon>Enterobacterales</taxon>
        <taxon>Enterobacteriaceae</taxon>
        <taxon>Salmonella</taxon>
    </lineage>
</organism>
<evidence type="ECO:0000255" key="1">
    <source>
        <dbReference type="HAMAP-Rule" id="MF_00233"/>
    </source>
</evidence>
<dbReference type="EMBL" id="CP001144">
    <property type="protein sequence ID" value="ACH75290.1"/>
    <property type="molecule type" value="Genomic_DNA"/>
</dbReference>
<dbReference type="RefSeq" id="WP_000174484.1">
    <property type="nucleotide sequence ID" value="NC_011205.1"/>
</dbReference>
<dbReference type="SMR" id="B5FU16"/>
<dbReference type="KEGG" id="sed:SeD_A1544"/>
<dbReference type="HOGENOM" id="CLU_092816_1_1_6"/>
<dbReference type="Proteomes" id="UP000008322">
    <property type="component" value="Chromosome"/>
</dbReference>
<dbReference type="GO" id="GO:0009279">
    <property type="term" value="C:cell outer membrane"/>
    <property type="evidence" value="ECO:0007669"/>
    <property type="project" value="UniProtKB-SubCell"/>
</dbReference>
<dbReference type="GO" id="GO:0044874">
    <property type="term" value="P:lipoprotein localization to outer membrane"/>
    <property type="evidence" value="ECO:0007669"/>
    <property type="project" value="UniProtKB-UniRule"/>
</dbReference>
<dbReference type="GO" id="GO:0015031">
    <property type="term" value="P:protein transport"/>
    <property type="evidence" value="ECO:0007669"/>
    <property type="project" value="UniProtKB-KW"/>
</dbReference>
<dbReference type="CDD" id="cd16326">
    <property type="entry name" value="LolB"/>
    <property type="match status" value="1"/>
</dbReference>
<dbReference type="FunFam" id="2.50.20.10:FF:000002">
    <property type="entry name" value="Outer-membrane lipoprotein LolB"/>
    <property type="match status" value="1"/>
</dbReference>
<dbReference type="Gene3D" id="2.50.20.10">
    <property type="entry name" value="Lipoprotein localisation LolA/LolB/LppX"/>
    <property type="match status" value="1"/>
</dbReference>
<dbReference type="HAMAP" id="MF_00233">
    <property type="entry name" value="LolB"/>
    <property type="match status" value="1"/>
</dbReference>
<dbReference type="InterPro" id="IPR029046">
    <property type="entry name" value="LolA/LolB/LppX"/>
</dbReference>
<dbReference type="InterPro" id="IPR004565">
    <property type="entry name" value="OM_lipoprot_LolB"/>
</dbReference>
<dbReference type="NCBIfam" id="TIGR00548">
    <property type="entry name" value="lolB"/>
    <property type="match status" value="1"/>
</dbReference>
<dbReference type="Pfam" id="PF03550">
    <property type="entry name" value="LolB"/>
    <property type="match status" value="1"/>
</dbReference>
<dbReference type="SUPFAM" id="SSF89392">
    <property type="entry name" value="Prokaryotic lipoproteins and lipoprotein localization factors"/>
    <property type="match status" value="1"/>
</dbReference>
<dbReference type="PROSITE" id="PS51257">
    <property type="entry name" value="PROKAR_LIPOPROTEIN"/>
    <property type="match status" value="1"/>
</dbReference>
<proteinExistence type="inferred from homology"/>
<gene>
    <name evidence="1" type="primary">lolB</name>
    <name type="ordered locus">SeD_A1544</name>
</gene>
<reference key="1">
    <citation type="journal article" date="2011" name="J. Bacteriol.">
        <title>Comparative genomics of 28 Salmonella enterica isolates: evidence for CRISPR-mediated adaptive sublineage evolution.</title>
        <authorList>
            <person name="Fricke W.F."/>
            <person name="Mammel M.K."/>
            <person name="McDermott P.F."/>
            <person name="Tartera C."/>
            <person name="White D.G."/>
            <person name="Leclerc J.E."/>
            <person name="Ravel J."/>
            <person name="Cebula T.A."/>
        </authorList>
    </citation>
    <scope>NUCLEOTIDE SEQUENCE [LARGE SCALE GENOMIC DNA]</scope>
    <source>
        <strain>CT_02021853</strain>
    </source>
</reference>